<name>RAD_RAT</name>
<sequence>MTLNGGSGAGGSRSAGRERDRRRGSTPWGPAPPLHRRSMPVDERDLQAALTPGSLAATAAGTRTQGQRLDWPEGSSDSLSSGDSGSEDGVYKVHAAGAPGVGKSALARIFGGVEDGPEAEAAGHTYDRSITVDGEEASLMVYDIWEQDGGCWLPGHCMAMGDAYVIVYSITDKGSFEKASELRVQLRARRQTDVPIILVGNKSDLVRSREVSVDEGRACAEVFDCKFIETSAALHHNVQALFEGVVRQIRLRRDSKEDNARRQAGTRRRESLGKKAKLFLGRIVARNSRKMAFLAKSKSCHDLSVL</sequence>
<organism>
    <name type="scientific">Rattus norvegicus</name>
    <name type="common">Rat</name>
    <dbReference type="NCBI Taxonomy" id="10116"/>
    <lineage>
        <taxon>Eukaryota</taxon>
        <taxon>Metazoa</taxon>
        <taxon>Chordata</taxon>
        <taxon>Craniata</taxon>
        <taxon>Vertebrata</taxon>
        <taxon>Euteleostomi</taxon>
        <taxon>Mammalia</taxon>
        <taxon>Eutheria</taxon>
        <taxon>Euarchontoglires</taxon>
        <taxon>Glires</taxon>
        <taxon>Rodentia</taxon>
        <taxon>Myomorpha</taxon>
        <taxon>Muroidea</taxon>
        <taxon>Muridae</taxon>
        <taxon>Murinae</taxon>
        <taxon>Rattus</taxon>
    </lineage>
</organism>
<proteinExistence type="evidence at transcript level"/>
<reference key="1">
    <citation type="submission" date="1994-12" db="EMBL/GenBank/DDBJ databases">
        <authorList>
            <person name="Rishi A.K."/>
            <person name="Gulamhussein A."/>
            <person name="Steele M.P."/>
        </authorList>
    </citation>
    <scope>NUCLEOTIDE SEQUENCE [MRNA]</scope>
    <source>
        <tissue>Lung</tissue>
    </source>
</reference>
<feature type="chain" id="PRO_0000122480" description="GTP-binding protein RAD">
    <location>
        <begin position="1"/>
        <end position="306"/>
    </location>
</feature>
<feature type="region of interest" description="Disordered" evidence="4">
    <location>
        <begin position="1"/>
        <end position="91"/>
    </location>
</feature>
<feature type="region of interest" description="Calmodulin-binding" evidence="1">
    <location>
        <begin position="276"/>
        <end position="295"/>
    </location>
</feature>
<feature type="compositionally biased region" description="Gly residues" evidence="4">
    <location>
        <begin position="1"/>
        <end position="13"/>
    </location>
</feature>
<feature type="compositionally biased region" description="Low complexity" evidence="4">
    <location>
        <begin position="56"/>
        <end position="88"/>
    </location>
</feature>
<feature type="binding site" evidence="1">
    <location>
        <begin position="97"/>
        <end position="104"/>
    </location>
    <ligand>
        <name>GTP</name>
        <dbReference type="ChEBI" id="CHEBI:37565"/>
    </ligand>
</feature>
<feature type="binding site" evidence="1">
    <location>
        <begin position="201"/>
        <end position="204"/>
    </location>
    <ligand>
        <name>GTP</name>
        <dbReference type="ChEBI" id="CHEBI:37565"/>
    </ligand>
</feature>
<feature type="modified residue" description="Omega-N-methylarginine" evidence="2">
    <location>
        <position position="23"/>
    </location>
</feature>
<feature type="modified residue" description="Phosphoserine" evidence="2">
    <location>
        <position position="25"/>
    </location>
</feature>
<comment type="function">
    <text evidence="2 3">May regulate basal voltage-dependent L-type Ca(2+) currents and be required for beta-adrenergic augmentation of Ca(2+) influx in cardiomyocytes, thereby regulating increases in heart rate and contractile force. May play an important role in cardiac antiarrhythmia via the strong suppression of voltage-dependent L-type Ca(2+) currents. Regulates voltage-gated L-type calcium channel subunit alpha-1C trafficking to the cell membrane. Inhibits cardiac hypertrophy through the calmodulin-dependent kinase II (CaMKII) pathway (By similarity). Inhibits phosphorylation and activation of CAMK2D (By similarity).</text>
</comment>
<comment type="subunit">
    <text evidence="1">Interacts with Calmodulin preferentially in the inactive, GDP-bound form (By similarity). Interacts with CAMK2D (By similarity). Interacts with CACNB2; interaction may be involved in beta-adrenergic regulation of heart rate and contractile force. Interaction with CACNB2 regulates the trafficking of CACNA1C to the cell membrane (By similarity).</text>
</comment>
<comment type="subcellular location">
    <subcellularLocation>
        <location evidence="1">Cell membrane</location>
    </subcellularLocation>
</comment>
<comment type="similarity">
    <text evidence="5">Belongs to the small GTPase superfamily. RGK family.</text>
</comment>
<comment type="sequence caution" evidence="5">
    <conflict type="erroneous initiation">
        <sequence resource="EMBL-CDS" id="AAA56719"/>
    </conflict>
</comment>
<gene>
    <name type="primary">Rrad</name>
    <name type="synonym">Rad</name>
</gene>
<keyword id="KW-0112">Calmodulin-binding</keyword>
<keyword id="KW-1003">Cell membrane</keyword>
<keyword id="KW-0342">GTP-binding</keyword>
<keyword id="KW-0472">Membrane</keyword>
<keyword id="KW-0488">Methylation</keyword>
<keyword id="KW-0547">Nucleotide-binding</keyword>
<keyword id="KW-0597">Phosphoprotein</keyword>
<keyword id="KW-1185">Reference proteome</keyword>
<dbReference type="EMBL" id="U12187">
    <property type="protein sequence ID" value="AAA56719.1"/>
    <property type="status" value="ALT_INIT"/>
    <property type="molecule type" value="mRNA"/>
</dbReference>
<dbReference type="SMR" id="P55043"/>
<dbReference type="FunCoup" id="P55043">
    <property type="interactions" value="157"/>
</dbReference>
<dbReference type="STRING" id="10116.ENSRNOP00000016259"/>
<dbReference type="PaxDb" id="10116-ENSRNOP00000016259"/>
<dbReference type="UCSC" id="RGD:69357">
    <property type="organism name" value="rat"/>
</dbReference>
<dbReference type="AGR" id="RGD:69357"/>
<dbReference type="RGD" id="69357">
    <property type="gene designation" value="Rrad"/>
</dbReference>
<dbReference type="eggNOG" id="KOG0395">
    <property type="taxonomic scope" value="Eukaryota"/>
</dbReference>
<dbReference type="InParanoid" id="P55043"/>
<dbReference type="PhylomeDB" id="P55043"/>
<dbReference type="PRO" id="PR:P55043"/>
<dbReference type="Proteomes" id="UP000002494">
    <property type="component" value="Unplaced"/>
</dbReference>
<dbReference type="GO" id="GO:0005886">
    <property type="term" value="C:plasma membrane"/>
    <property type="evidence" value="ECO:0000266"/>
    <property type="project" value="RGD"/>
</dbReference>
<dbReference type="GO" id="GO:0030315">
    <property type="term" value="C:T-tubule"/>
    <property type="evidence" value="ECO:0000266"/>
    <property type="project" value="RGD"/>
</dbReference>
<dbReference type="GO" id="GO:0005246">
    <property type="term" value="F:calcium channel regulator activity"/>
    <property type="evidence" value="ECO:0000318"/>
    <property type="project" value="GO_Central"/>
</dbReference>
<dbReference type="GO" id="GO:0005516">
    <property type="term" value="F:calmodulin binding"/>
    <property type="evidence" value="ECO:0007669"/>
    <property type="project" value="UniProtKB-KW"/>
</dbReference>
<dbReference type="GO" id="GO:0005525">
    <property type="term" value="F:GTP binding"/>
    <property type="evidence" value="ECO:0000318"/>
    <property type="project" value="GO_Central"/>
</dbReference>
<dbReference type="GO" id="GO:0003924">
    <property type="term" value="F:GTPase activity"/>
    <property type="evidence" value="ECO:0007669"/>
    <property type="project" value="InterPro"/>
</dbReference>
<dbReference type="GO" id="GO:0030308">
    <property type="term" value="P:negative regulation of cell growth"/>
    <property type="evidence" value="ECO:0000315"/>
    <property type="project" value="RGD"/>
</dbReference>
<dbReference type="CDD" id="cd04148">
    <property type="entry name" value="RGK"/>
    <property type="match status" value="1"/>
</dbReference>
<dbReference type="FunFam" id="3.40.50.300:FF:000311">
    <property type="entry name" value="GTP-binding protein RAD"/>
    <property type="match status" value="1"/>
</dbReference>
<dbReference type="Gene3D" id="3.40.50.300">
    <property type="entry name" value="P-loop containing nucleotide triphosphate hydrolases"/>
    <property type="match status" value="1"/>
</dbReference>
<dbReference type="InterPro" id="IPR027417">
    <property type="entry name" value="P-loop_NTPase"/>
</dbReference>
<dbReference type="InterPro" id="IPR017358">
    <property type="entry name" value="RGK"/>
</dbReference>
<dbReference type="InterPro" id="IPR051641">
    <property type="entry name" value="RGK_GTP-binding_reg"/>
</dbReference>
<dbReference type="InterPro" id="IPR001806">
    <property type="entry name" value="Small_GTPase"/>
</dbReference>
<dbReference type="PANTHER" id="PTHR45775:SF3">
    <property type="entry name" value="GTP-BINDING PROTEIN RAD"/>
    <property type="match status" value="1"/>
</dbReference>
<dbReference type="PANTHER" id="PTHR45775">
    <property type="entry name" value="RAD, GEM/KIR FAMILY MEMBER 2, ISOFORM C"/>
    <property type="match status" value="1"/>
</dbReference>
<dbReference type="Pfam" id="PF00071">
    <property type="entry name" value="Ras"/>
    <property type="match status" value="1"/>
</dbReference>
<dbReference type="PIRSF" id="PIRSF038017">
    <property type="entry name" value="GTP-binding_GEM"/>
    <property type="match status" value="1"/>
</dbReference>
<dbReference type="PRINTS" id="PR00449">
    <property type="entry name" value="RASTRNSFRMNG"/>
</dbReference>
<dbReference type="SMART" id="SM00175">
    <property type="entry name" value="RAB"/>
    <property type="match status" value="1"/>
</dbReference>
<dbReference type="SMART" id="SM00173">
    <property type="entry name" value="RAS"/>
    <property type="match status" value="1"/>
</dbReference>
<dbReference type="SMART" id="SM00174">
    <property type="entry name" value="RHO"/>
    <property type="match status" value="1"/>
</dbReference>
<dbReference type="SUPFAM" id="SSF52540">
    <property type="entry name" value="P-loop containing nucleoside triphosphate hydrolases"/>
    <property type="match status" value="1"/>
</dbReference>
<dbReference type="PROSITE" id="PS51421">
    <property type="entry name" value="RAS"/>
    <property type="match status" value="1"/>
</dbReference>
<evidence type="ECO:0000250" key="1"/>
<evidence type="ECO:0000250" key="2">
    <source>
        <dbReference type="UniProtKB" id="O88667"/>
    </source>
</evidence>
<evidence type="ECO:0000250" key="3">
    <source>
        <dbReference type="UniProtKB" id="P55042"/>
    </source>
</evidence>
<evidence type="ECO:0000256" key="4">
    <source>
        <dbReference type="SAM" id="MobiDB-lite"/>
    </source>
</evidence>
<evidence type="ECO:0000305" key="5"/>
<protein>
    <recommendedName>
        <fullName>GTP-binding protein RAD</fullName>
    </recommendedName>
    <alternativeName>
        <fullName>RAD1</fullName>
    </alternativeName>
    <alternativeName>
        <fullName>Ras associated with diabetes</fullName>
    </alternativeName>
</protein>
<accession>P55043</accession>